<reference key="1">
    <citation type="journal article" date="2011" name="J. Bacteriol.">
        <title>Comparative genomics of 28 Salmonella enterica isolates: evidence for CRISPR-mediated adaptive sublineage evolution.</title>
        <authorList>
            <person name="Fricke W.F."/>
            <person name="Mammel M.K."/>
            <person name="McDermott P.F."/>
            <person name="Tartera C."/>
            <person name="White D.G."/>
            <person name="Leclerc J.E."/>
            <person name="Ravel J."/>
            <person name="Cebula T.A."/>
        </authorList>
    </citation>
    <scope>NUCLEOTIDE SEQUENCE [LARGE SCALE GENOMIC DNA]</scope>
    <source>
        <strain>SL254</strain>
    </source>
</reference>
<gene>
    <name evidence="1" type="primary">rlmI</name>
    <name type="ordered locus">SNSL254_A1121</name>
</gene>
<sequence>MTESTFPQYPRLVLSKGREKSLLRRHPWVFSGAVSRLEGKANLGETIDIVDHQGKWLARGAWSPASQIRARVWTFDKAESIDIAFFTRRLRQAQQWRDWLAKKDGLDSYRLIAGESDGLPGVTIDRFGHFLVLQLLSAGAEYQRAALISALQTCYPDCAIYDRSDVAVRKKEGMALTQGPVTGELPPALLPIEEHGMKLLVDIQGGHKTGYYLDQRDSRLATRRYVENQRVLNCFSYTGGFAVSALMGGCRQVVSVDTSQDALDIARQNVELNQLDLSKAEFVRDDVFKLLRAYRERGEKFDVIIMDPPKFVENKSQLMGACRGYKDINMLAIQLLNPGGILLTFSCSGLMTSDLFQKIIADAAIDAGRDVQFIEQFRQAADHPVIATYPEGLYLKGFACRVM</sequence>
<accession>B4T209</accession>
<organism>
    <name type="scientific">Salmonella newport (strain SL254)</name>
    <dbReference type="NCBI Taxonomy" id="423368"/>
    <lineage>
        <taxon>Bacteria</taxon>
        <taxon>Pseudomonadati</taxon>
        <taxon>Pseudomonadota</taxon>
        <taxon>Gammaproteobacteria</taxon>
        <taxon>Enterobacterales</taxon>
        <taxon>Enterobacteriaceae</taxon>
        <taxon>Salmonella</taxon>
    </lineage>
</organism>
<dbReference type="EC" id="2.1.1.191" evidence="1"/>
<dbReference type="EMBL" id="CP001113">
    <property type="protein sequence ID" value="ACF63282.1"/>
    <property type="molecule type" value="Genomic_DNA"/>
</dbReference>
<dbReference type="RefSeq" id="WP_000140482.1">
    <property type="nucleotide sequence ID" value="NZ_CCMR01000003.1"/>
</dbReference>
<dbReference type="SMR" id="B4T209"/>
<dbReference type="KEGG" id="see:SNSL254_A1121"/>
<dbReference type="HOGENOM" id="CLU_014042_0_0_6"/>
<dbReference type="Proteomes" id="UP000008824">
    <property type="component" value="Chromosome"/>
</dbReference>
<dbReference type="GO" id="GO:0005737">
    <property type="term" value="C:cytoplasm"/>
    <property type="evidence" value="ECO:0007669"/>
    <property type="project" value="UniProtKB-SubCell"/>
</dbReference>
<dbReference type="GO" id="GO:0003723">
    <property type="term" value="F:RNA binding"/>
    <property type="evidence" value="ECO:0007669"/>
    <property type="project" value="UniProtKB-KW"/>
</dbReference>
<dbReference type="GO" id="GO:0016434">
    <property type="term" value="F:rRNA (cytosine) methyltransferase activity"/>
    <property type="evidence" value="ECO:0007669"/>
    <property type="project" value="UniProtKB-UniRule"/>
</dbReference>
<dbReference type="CDD" id="cd02440">
    <property type="entry name" value="AdoMet_MTases"/>
    <property type="match status" value="1"/>
</dbReference>
<dbReference type="CDD" id="cd21153">
    <property type="entry name" value="PUA_RlmI"/>
    <property type="match status" value="1"/>
</dbReference>
<dbReference type="CDD" id="cd11572">
    <property type="entry name" value="RlmI_M_like"/>
    <property type="match status" value="1"/>
</dbReference>
<dbReference type="FunFam" id="3.40.50.150:FF:000044">
    <property type="entry name" value="Ribosomal RNA large subunit methyltransferase I"/>
    <property type="match status" value="1"/>
</dbReference>
<dbReference type="Gene3D" id="2.30.130.10">
    <property type="entry name" value="PUA domain"/>
    <property type="match status" value="1"/>
</dbReference>
<dbReference type="Gene3D" id="3.30.750.80">
    <property type="entry name" value="RNA methyltransferase domain (HRMD) like"/>
    <property type="match status" value="1"/>
</dbReference>
<dbReference type="Gene3D" id="3.40.50.150">
    <property type="entry name" value="Vaccinia Virus protein VP39"/>
    <property type="match status" value="1"/>
</dbReference>
<dbReference type="HAMAP" id="MF_01857">
    <property type="entry name" value="23SrRNA_methyltr_I"/>
    <property type="match status" value="1"/>
</dbReference>
<dbReference type="InterPro" id="IPR002478">
    <property type="entry name" value="PUA"/>
</dbReference>
<dbReference type="InterPro" id="IPR015947">
    <property type="entry name" value="PUA-like_sf"/>
</dbReference>
<dbReference type="InterPro" id="IPR036974">
    <property type="entry name" value="PUA_sf"/>
</dbReference>
<dbReference type="InterPro" id="IPR023542">
    <property type="entry name" value="RLMI"/>
</dbReference>
<dbReference type="InterPro" id="IPR041532">
    <property type="entry name" value="RlmI-like_PUA"/>
</dbReference>
<dbReference type="InterPro" id="IPR019614">
    <property type="entry name" value="SAM-dep_methyl-trfase"/>
</dbReference>
<dbReference type="InterPro" id="IPR029063">
    <property type="entry name" value="SAM-dependent_MTases_sf"/>
</dbReference>
<dbReference type="NCBIfam" id="NF011707">
    <property type="entry name" value="PRK15128.1"/>
    <property type="match status" value="1"/>
</dbReference>
<dbReference type="PANTHER" id="PTHR42873">
    <property type="entry name" value="RIBOSOMAL RNA LARGE SUBUNIT METHYLTRANSFERASE"/>
    <property type="match status" value="1"/>
</dbReference>
<dbReference type="PANTHER" id="PTHR42873:SF1">
    <property type="entry name" value="S-ADENOSYLMETHIONINE-DEPENDENT METHYLTRANSFERASE DOMAIN-CONTAINING PROTEIN"/>
    <property type="match status" value="1"/>
</dbReference>
<dbReference type="Pfam" id="PF10672">
    <property type="entry name" value="Methyltrans_SAM"/>
    <property type="match status" value="1"/>
</dbReference>
<dbReference type="Pfam" id="PF17785">
    <property type="entry name" value="PUA_3"/>
    <property type="match status" value="1"/>
</dbReference>
<dbReference type="SMART" id="SM00359">
    <property type="entry name" value="PUA"/>
    <property type="match status" value="1"/>
</dbReference>
<dbReference type="SUPFAM" id="SSF88697">
    <property type="entry name" value="PUA domain-like"/>
    <property type="match status" value="1"/>
</dbReference>
<dbReference type="SUPFAM" id="SSF53335">
    <property type="entry name" value="S-adenosyl-L-methionine-dependent methyltransferases"/>
    <property type="match status" value="1"/>
</dbReference>
<dbReference type="PROSITE" id="PS50890">
    <property type="entry name" value="PUA"/>
    <property type="match status" value="1"/>
</dbReference>
<name>RLMI_SALNS</name>
<protein>
    <recommendedName>
        <fullName evidence="1">Ribosomal RNA large subunit methyltransferase I</fullName>
        <ecNumber evidence="1">2.1.1.191</ecNumber>
    </recommendedName>
    <alternativeName>
        <fullName evidence="1">23S rRNA m5C1962 methyltransferase</fullName>
    </alternativeName>
    <alternativeName>
        <fullName evidence="1">rRNA (cytosine-C(5)-)-methyltransferase RlmI</fullName>
    </alternativeName>
</protein>
<comment type="function">
    <text evidence="1">Specifically methylates the cytosine at position 1962 (m5C1962) of 23S rRNA.</text>
</comment>
<comment type="catalytic activity">
    <reaction evidence="1">
        <text>cytidine(1962) in 23S rRNA + S-adenosyl-L-methionine = 5-methylcytidine(1962) in 23S rRNA + S-adenosyl-L-homocysteine + H(+)</text>
        <dbReference type="Rhea" id="RHEA:42912"/>
        <dbReference type="Rhea" id="RHEA-COMP:10382"/>
        <dbReference type="Rhea" id="RHEA-COMP:10386"/>
        <dbReference type="ChEBI" id="CHEBI:15378"/>
        <dbReference type="ChEBI" id="CHEBI:57856"/>
        <dbReference type="ChEBI" id="CHEBI:59789"/>
        <dbReference type="ChEBI" id="CHEBI:74483"/>
        <dbReference type="ChEBI" id="CHEBI:82748"/>
        <dbReference type="EC" id="2.1.1.191"/>
    </reaction>
</comment>
<comment type="subcellular location">
    <subcellularLocation>
        <location evidence="1">Cytoplasm</location>
    </subcellularLocation>
</comment>
<comment type="similarity">
    <text evidence="1">Belongs to the methyltransferase superfamily. RlmI family.</text>
</comment>
<feature type="chain" id="PRO_0000366246" description="Ribosomal RNA large subunit methyltransferase I">
    <location>
        <begin position="1"/>
        <end position="403"/>
    </location>
</feature>
<feature type="domain" description="PUA" evidence="1">
    <location>
        <begin position="9"/>
        <end position="88"/>
    </location>
</feature>
<keyword id="KW-0963">Cytoplasm</keyword>
<keyword id="KW-0489">Methyltransferase</keyword>
<keyword id="KW-0694">RNA-binding</keyword>
<keyword id="KW-0698">rRNA processing</keyword>
<keyword id="KW-0949">S-adenosyl-L-methionine</keyword>
<keyword id="KW-0808">Transferase</keyword>
<proteinExistence type="inferred from homology"/>
<evidence type="ECO:0000255" key="1">
    <source>
        <dbReference type="HAMAP-Rule" id="MF_01857"/>
    </source>
</evidence>